<accession>Q6CZU4</accession>
<gene>
    <name evidence="1" type="primary">kefG</name>
    <name type="ordered locus">ECA4057</name>
</gene>
<organism>
    <name type="scientific">Pectobacterium atrosepticum (strain SCRI 1043 / ATCC BAA-672)</name>
    <name type="common">Erwinia carotovora subsp. atroseptica</name>
    <dbReference type="NCBI Taxonomy" id="218491"/>
    <lineage>
        <taxon>Bacteria</taxon>
        <taxon>Pseudomonadati</taxon>
        <taxon>Pseudomonadota</taxon>
        <taxon>Gammaproteobacteria</taxon>
        <taxon>Enterobacterales</taxon>
        <taxon>Pectobacteriaceae</taxon>
        <taxon>Pectobacterium</taxon>
    </lineage>
</organism>
<dbReference type="EC" id="1.6.5.2" evidence="1"/>
<dbReference type="EMBL" id="BX950851">
    <property type="protein sequence ID" value="CAG76954.1"/>
    <property type="molecule type" value="Genomic_DNA"/>
</dbReference>
<dbReference type="RefSeq" id="WP_011095532.1">
    <property type="nucleotide sequence ID" value="NC_004547.2"/>
</dbReference>
<dbReference type="SMR" id="Q6CZU4"/>
<dbReference type="STRING" id="218491.ECA4057"/>
<dbReference type="GeneID" id="57210721"/>
<dbReference type="KEGG" id="eca:ECA4057"/>
<dbReference type="eggNOG" id="COG2249">
    <property type="taxonomic scope" value="Bacteria"/>
</dbReference>
<dbReference type="HOGENOM" id="CLU_058643_0_1_6"/>
<dbReference type="Proteomes" id="UP000007966">
    <property type="component" value="Chromosome"/>
</dbReference>
<dbReference type="GO" id="GO:0005886">
    <property type="term" value="C:plasma membrane"/>
    <property type="evidence" value="ECO:0007669"/>
    <property type="project" value="UniProtKB-SubCell"/>
</dbReference>
<dbReference type="GO" id="GO:0009055">
    <property type="term" value="F:electron transfer activity"/>
    <property type="evidence" value="ECO:0007669"/>
    <property type="project" value="TreeGrafter"/>
</dbReference>
<dbReference type="GO" id="GO:0010181">
    <property type="term" value="F:FMN binding"/>
    <property type="evidence" value="ECO:0007669"/>
    <property type="project" value="TreeGrafter"/>
</dbReference>
<dbReference type="GO" id="GO:0050136">
    <property type="term" value="F:NADH:ubiquinone reductase (non-electrogenic) activity"/>
    <property type="evidence" value="ECO:0007669"/>
    <property type="project" value="RHEA"/>
</dbReference>
<dbReference type="GO" id="GO:0008753">
    <property type="term" value="F:NADPH dehydrogenase (quinone) activity"/>
    <property type="evidence" value="ECO:0007669"/>
    <property type="project" value="RHEA"/>
</dbReference>
<dbReference type="GO" id="GO:1901381">
    <property type="term" value="P:positive regulation of potassium ion transmembrane transport"/>
    <property type="evidence" value="ECO:0007669"/>
    <property type="project" value="UniProtKB-UniRule"/>
</dbReference>
<dbReference type="GO" id="GO:0006813">
    <property type="term" value="P:potassium ion transport"/>
    <property type="evidence" value="ECO:0007669"/>
    <property type="project" value="InterPro"/>
</dbReference>
<dbReference type="FunFam" id="3.40.50.360:FF:000013">
    <property type="entry name" value="Glutathione-regulated potassium-efflux system ancillary protein KefG"/>
    <property type="match status" value="1"/>
</dbReference>
<dbReference type="Gene3D" id="3.40.50.360">
    <property type="match status" value="1"/>
</dbReference>
<dbReference type="HAMAP" id="MF_01415">
    <property type="entry name" value="K_H_efflux_KefG"/>
    <property type="match status" value="1"/>
</dbReference>
<dbReference type="InterPro" id="IPR003680">
    <property type="entry name" value="Flavodoxin_fold"/>
</dbReference>
<dbReference type="InterPro" id="IPR029039">
    <property type="entry name" value="Flavoprotein-like_sf"/>
</dbReference>
<dbReference type="InterPro" id="IPR023947">
    <property type="entry name" value="K_H_efflux_KefG"/>
</dbReference>
<dbReference type="InterPro" id="IPR046980">
    <property type="entry name" value="KefG/KefF"/>
</dbReference>
<dbReference type="NCBIfam" id="NF003430">
    <property type="entry name" value="PRK04930.1"/>
    <property type="match status" value="1"/>
</dbReference>
<dbReference type="PANTHER" id="PTHR47307">
    <property type="entry name" value="GLUTATHIONE-REGULATED POTASSIUM-EFFLUX SYSTEM ANCILLARY PROTEIN KEFG"/>
    <property type="match status" value="1"/>
</dbReference>
<dbReference type="PANTHER" id="PTHR47307:SF1">
    <property type="entry name" value="GLUTATHIONE-REGULATED POTASSIUM-EFFLUX SYSTEM ANCILLARY PROTEIN KEFG"/>
    <property type="match status" value="1"/>
</dbReference>
<dbReference type="Pfam" id="PF02525">
    <property type="entry name" value="Flavodoxin_2"/>
    <property type="match status" value="1"/>
</dbReference>
<dbReference type="SUPFAM" id="SSF52218">
    <property type="entry name" value="Flavoproteins"/>
    <property type="match status" value="1"/>
</dbReference>
<keyword id="KW-0997">Cell inner membrane</keyword>
<keyword id="KW-1003">Cell membrane</keyword>
<keyword id="KW-0472">Membrane</keyword>
<keyword id="KW-0520">NAD</keyword>
<keyword id="KW-0560">Oxidoreductase</keyword>
<keyword id="KW-1185">Reference proteome</keyword>
<reference key="1">
    <citation type="journal article" date="2004" name="Proc. Natl. Acad. Sci. U.S.A.">
        <title>Genome sequence of the enterobacterial phytopathogen Erwinia carotovora subsp. atroseptica and characterization of virulence factors.</title>
        <authorList>
            <person name="Bell K.S."/>
            <person name="Sebaihia M."/>
            <person name="Pritchard L."/>
            <person name="Holden M.T.G."/>
            <person name="Hyman L.J."/>
            <person name="Holeva M.C."/>
            <person name="Thomson N.R."/>
            <person name="Bentley S.D."/>
            <person name="Churcher L.J.C."/>
            <person name="Mungall K."/>
            <person name="Atkin R."/>
            <person name="Bason N."/>
            <person name="Brooks K."/>
            <person name="Chillingworth T."/>
            <person name="Clark K."/>
            <person name="Doggett J."/>
            <person name="Fraser A."/>
            <person name="Hance Z."/>
            <person name="Hauser H."/>
            <person name="Jagels K."/>
            <person name="Moule S."/>
            <person name="Norbertczak H."/>
            <person name="Ormond D."/>
            <person name="Price C."/>
            <person name="Quail M.A."/>
            <person name="Sanders M."/>
            <person name="Walker D."/>
            <person name="Whitehead S."/>
            <person name="Salmond G.P.C."/>
            <person name="Birch P.R.J."/>
            <person name="Parkhill J."/>
            <person name="Toth I.K."/>
        </authorList>
    </citation>
    <scope>NUCLEOTIDE SEQUENCE [LARGE SCALE GENOMIC DNA]</scope>
    <source>
        <strain>SCRI 1043 / ATCC BAA-672</strain>
    </source>
</reference>
<protein>
    <recommendedName>
        <fullName evidence="1">Glutathione-regulated potassium-efflux system ancillary protein KefG</fullName>
    </recommendedName>
    <alternativeName>
        <fullName evidence="1">Putative quinone oxidoreductase KefG</fullName>
        <ecNumber evidence="1">1.6.5.2</ecNumber>
    </alternativeName>
</protein>
<name>KEFG_PECAS</name>
<comment type="function">
    <text evidence="1">Regulatory subunit of a potassium efflux system that confers protection against electrophiles. Required for full activity of KefB.</text>
</comment>
<comment type="catalytic activity">
    <reaction evidence="1">
        <text>a quinone + NADH + H(+) = a quinol + NAD(+)</text>
        <dbReference type="Rhea" id="RHEA:46160"/>
        <dbReference type="ChEBI" id="CHEBI:15378"/>
        <dbReference type="ChEBI" id="CHEBI:24646"/>
        <dbReference type="ChEBI" id="CHEBI:57540"/>
        <dbReference type="ChEBI" id="CHEBI:57945"/>
        <dbReference type="ChEBI" id="CHEBI:132124"/>
        <dbReference type="EC" id="1.6.5.2"/>
    </reaction>
</comment>
<comment type="catalytic activity">
    <reaction evidence="1">
        <text>a quinone + NADPH + H(+) = a quinol + NADP(+)</text>
        <dbReference type="Rhea" id="RHEA:46164"/>
        <dbReference type="ChEBI" id="CHEBI:15378"/>
        <dbReference type="ChEBI" id="CHEBI:24646"/>
        <dbReference type="ChEBI" id="CHEBI:57783"/>
        <dbReference type="ChEBI" id="CHEBI:58349"/>
        <dbReference type="ChEBI" id="CHEBI:132124"/>
        <dbReference type="EC" id="1.6.5.2"/>
    </reaction>
</comment>
<comment type="subunit">
    <text evidence="1">Interacts with KefB.</text>
</comment>
<comment type="subcellular location">
    <subcellularLocation>
        <location evidence="1">Cell inner membrane</location>
        <topology evidence="1">Peripheral membrane protein</topology>
        <orientation evidence="1">Cytoplasmic side</orientation>
    </subcellularLocation>
</comment>
<comment type="similarity">
    <text evidence="1">Belongs to the NAD(P)H dehydrogenase (quinone) family. KefG subfamily.</text>
</comment>
<evidence type="ECO:0000255" key="1">
    <source>
        <dbReference type="HAMAP-Rule" id="MF_01415"/>
    </source>
</evidence>
<sequence>MSQPPKILLLYAHPEPQDSVANRVLLQPAQQLANVTVHDLYAHYPDFFIDIHHEQQLLREHQIIVFQHPFYTYSCPALLKEWLDRVLSRGFANGIGGNALAGKYWRSVITTGEPEDAYHADGNNRYPMDDLLRPFELTAAMCRMHWMRPMIVYWARRLQPDVLSSQARAYGEWLSSPLPEEER</sequence>
<proteinExistence type="inferred from homology"/>
<feature type="chain" id="PRO_0000071645" description="Glutathione-regulated potassium-efflux system ancillary protein KefG">
    <location>
        <begin position="1"/>
        <end position="183"/>
    </location>
</feature>